<keyword id="KW-0010">Activator</keyword>
<keyword id="KW-0025">Alternative splicing</keyword>
<keyword id="KW-0235">DNA replication</keyword>
<keyword id="KW-0238">DNA-binding</keyword>
<keyword id="KW-0488">Methylation</keyword>
<keyword id="KW-0539">Nucleus</keyword>
<keyword id="KW-0597">Phosphoprotein</keyword>
<keyword id="KW-1185">Reference proteome</keyword>
<keyword id="KW-0804">Transcription</keyword>
<keyword id="KW-0805">Transcription regulation</keyword>
<gene>
    <name type="primary">Nfia</name>
</gene>
<sequence length="532" mass="58553">MKLADSVMAGKASDGSIKWQLCYDISARTWWMDEFHPFIEALLPHVRAFAYTWFNLQARKRKYFKKHEKRMSKEEERAVKDELLSEKPEVKQKWASRLLAKLRKDIRPEYREDFVLTVTGKKPPCCVLSNPDQKGKMRRIDCLRQADKVWRLDLVMVILFKGIPLESTDGERLVKSPQCSNPGLCVQPHHIGVSVKELDLYLAYFVHAADSSQSESPSQPSEADIKDQPENGHLGFQDSFVTSGVFSVTELVRVSQTPIAAGTGPNFSLSDLESSSYYSMSPGAMRRSLPSTSSTSSTKRLKSVEDEMDSPGEEPFYTGQGRSPGSGSQSSGWHEVEPGLPSPSTLKKSEKSGFSSPSPSQTSSLGTAFTQHHRPVITGPRASPHATPSTLHFPTSPIIQQPGPYFSHPAIRYHPQETLKEFVQLVCPDAGQQAGQVGFLNPNGSSQGKVHNPFLPTPMLPPPPPPPMARPVPLPMPDTKPPTTSTEGGAASPTSPTYSTPSTSPANRFVSVGPRDPSFVNIPQQTQSWYLG</sequence>
<accession>Q02780</accession>
<accession>P70250</accession>
<accession>P70251</accession>
<accession>Q3UUZ2</accession>
<accession>Q61960</accession>
<accession>Q8VBT5</accession>
<accession>Q9R1G5</accession>
<feature type="chain" id="PRO_0000100192" description="Nuclear factor 1 A-type">
    <location>
        <begin position="1"/>
        <end position="532"/>
    </location>
</feature>
<feature type="DNA-binding region" description="CTF/NF-I" evidence="3">
    <location>
        <begin position="24"/>
        <end position="217"/>
    </location>
</feature>
<feature type="region of interest" description="Disordered" evidence="4">
    <location>
        <begin position="212"/>
        <end position="234"/>
    </location>
</feature>
<feature type="region of interest" description="Disordered" evidence="4">
    <location>
        <begin position="282"/>
        <end position="407"/>
    </location>
</feature>
<feature type="region of interest" description="Disordered" evidence="4">
    <location>
        <begin position="441"/>
        <end position="532"/>
    </location>
</feature>
<feature type="short sequence motif" description="9aaTAD" evidence="2">
    <location>
        <begin position="417"/>
        <end position="425"/>
    </location>
</feature>
<feature type="compositionally biased region" description="Low complexity" evidence="4">
    <location>
        <begin position="212"/>
        <end position="222"/>
    </location>
</feature>
<feature type="compositionally biased region" description="Low complexity" evidence="4">
    <location>
        <begin position="282"/>
        <end position="298"/>
    </location>
</feature>
<feature type="compositionally biased region" description="Low complexity" evidence="4">
    <location>
        <begin position="319"/>
        <end position="332"/>
    </location>
</feature>
<feature type="compositionally biased region" description="Low complexity" evidence="4">
    <location>
        <begin position="352"/>
        <end position="364"/>
    </location>
</feature>
<feature type="compositionally biased region" description="Polar residues" evidence="4">
    <location>
        <begin position="386"/>
        <end position="399"/>
    </location>
</feature>
<feature type="compositionally biased region" description="Pro residues" evidence="4">
    <location>
        <begin position="455"/>
        <end position="480"/>
    </location>
</feature>
<feature type="compositionally biased region" description="Low complexity" evidence="4">
    <location>
        <begin position="492"/>
        <end position="505"/>
    </location>
</feature>
<feature type="compositionally biased region" description="Polar residues" evidence="4">
    <location>
        <begin position="521"/>
        <end position="532"/>
    </location>
</feature>
<feature type="modified residue" description="Phosphoserine" evidence="2">
    <location>
        <position position="281"/>
    </location>
</feature>
<feature type="modified residue" description="Phosphoserine" evidence="2">
    <location>
        <position position="288"/>
    </location>
</feature>
<feature type="modified residue" description="Phosphoserine" evidence="10 11">
    <location>
        <position position="303"/>
    </location>
</feature>
<feature type="modified residue" description="Phosphoserine" evidence="9 10 11">
    <location>
        <position position="310"/>
    </location>
</feature>
<feature type="modified residue" description="Phosphoserine" evidence="10 11">
    <location>
        <position position="323"/>
    </location>
</feature>
<feature type="modified residue" description="Phosphoserine" evidence="1">
    <location>
        <position position="328"/>
    </location>
</feature>
<feature type="modified residue" description="Phosphoserine" evidence="10 11">
    <location>
        <position position="342"/>
    </location>
</feature>
<feature type="modified residue" description="Phosphoserine" evidence="2">
    <location>
        <position position="383"/>
    </location>
</feature>
<feature type="modified residue" description="Asymmetric dimethylarginine" evidence="12">
    <location>
        <position position="412"/>
    </location>
</feature>
<feature type="modified residue" description="Phosphoserine" evidence="2">
    <location>
        <position position="492"/>
    </location>
</feature>
<feature type="modified residue" description="Phosphothreonine" evidence="2">
    <location>
        <position position="494"/>
    </location>
</feature>
<feature type="splice variant" id="VSP_003537" description="In isoform 1, isoform 5 and isoform 7." evidence="5 6 7">
    <original>MKLADSVMAGKASDGSIKWQLCYDISARTWWM</original>
    <variation>MYSPLCLTQ</variation>
    <location>
        <begin position="1"/>
        <end position="32"/>
    </location>
</feature>
<feature type="splice variant" id="VSP_003539" description="In isoform 4." evidence="6">
    <original>MKLADSVMAGKASDGSIKWQLCYDISARTWWM</original>
    <variation>VWFQQPLPFADLLPGNSIHTASPTCLTQ</variation>
    <location>
        <begin position="1"/>
        <end position="32"/>
    </location>
</feature>
<feature type="splice variant" id="VSP_003540" description="In isoform 6." evidence="8">
    <original>MKLADSVMAGKASDGSIKWQLCYDISARTWWM</original>
    <variation>LSPPLSPSRTHTHAHLQPAHRRARTPRRPAVMYSPLCLTQ</variation>
    <location>
        <begin position="1"/>
        <end position="32"/>
    </location>
</feature>
<feature type="splice variant" id="VSP_003538" description="In isoform 3." evidence="6">
    <location>
        <begin position="1"/>
        <end position="31"/>
    </location>
</feature>
<feature type="splice variant" id="VSP_003541" description="In isoform 5." evidence="8">
    <location>
        <begin position="339"/>
        <end position="381"/>
    </location>
</feature>
<feature type="splice variant" id="VSP_003542" description="In isoform 6." evidence="8">
    <original>LPSPSTLKKSEKSGFSSPSPSQTSSLGTAFT</original>
    <variation>EQSHKREGNGVCVWLCCHGRVVESSRYNGSA</variation>
    <location>
        <begin position="340"/>
        <end position="370"/>
    </location>
</feature>
<feature type="splice variant" id="VSP_003543" description="In isoform 6." evidence="8">
    <location>
        <begin position="371"/>
        <end position="532"/>
    </location>
</feature>
<feature type="splice variant" id="VSP_003544" description="In isoform 1." evidence="6 7">
    <location>
        <begin position="476"/>
        <end position="532"/>
    </location>
</feature>
<reference key="1">
    <citation type="journal article" date="1990" name="J. Biol. Chem.">
        <title>Isolation of complementary DNAs encoding a cerebellum-enriched nuclear factor I family that activates transcription from the mouse myelin basic protein promoter.</title>
        <authorList>
            <person name="Inoue T."/>
            <person name="Tamura T.A."/>
            <person name="Furuichi T."/>
            <person name="Mikoshiba K."/>
        </authorList>
    </citation>
    <scope>NUCLEOTIDE SEQUENCE [MRNA] (ISOFORMS 1; 2; 3 AND 4)</scope>
    <scope>PARTIAL NUCLEOTIDE SEQUENCE (ISOFORM 6)</scope>
    <source>
        <tissue>Brain</tissue>
    </source>
</reference>
<reference key="2">
    <citation type="journal article" date="2002" name="J. Neurosci.">
        <title>Congenic mapping of alcohol and pentobarbital withdrawal liability loci to a &lt;1 centimorgan interval of murine chromosome 4: identification of Mpdz as a candidate gene.</title>
        <authorList>
            <person name="Fehr C."/>
            <person name="Shirley R.L."/>
            <person name="Belknap J.K."/>
            <person name="Crabbe J.C."/>
            <person name="Buck K.J."/>
        </authorList>
    </citation>
    <scope>NUCLEOTIDE SEQUENCE (ISOFORM 7)</scope>
    <source>
        <strain>C57BL/6J</strain>
        <strain>DBA/2J</strain>
        <tissue>Brain</tissue>
    </source>
</reference>
<reference key="3">
    <citation type="journal article" date="2003" name="Gene">
        <title>Genomic organization, splice products and mouse chromosomal localization of genes for transcription factor Nuclear Factor One.</title>
        <authorList>
            <person name="Gruender A."/>
            <person name="Qian F."/>
            <person name="Ebel T.T."/>
            <person name="Mincheva A."/>
            <person name="Lichter P."/>
            <person name="Kruse U."/>
            <person name="Sippel A.E."/>
        </authorList>
    </citation>
    <scope>NUCLEOTIDE SEQUENCE (ISOFORMS 1 AND 5)</scope>
    <source>
        <strain>NIH Swiss</strain>
        <tissue>Embryo</tissue>
    </source>
</reference>
<reference key="4">
    <citation type="journal article" date="2005" name="Science">
        <title>The transcriptional landscape of the mammalian genome.</title>
        <authorList>
            <person name="Carninci P."/>
            <person name="Kasukawa T."/>
            <person name="Katayama S."/>
            <person name="Gough J."/>
            <person name="Frith M.C."/>
            <person name="Maeda N."/>
            <person name="Oyama R."/>
            <person name="Ravasi T."/>
            <person name="Lenhard B."/>
            <person name="Wells C."/>
            <person name="Kodzius R."/>
            <person name="Shimokawa K."/>
            <person name="Bajic V.B."/>
            <person name="Brenner S.E."/>
            <person name="Batalov S."/>
            <person name="Forrest A.R."/>
            <person name="Zavolan M."/>
            <person name="Davis M.J."/>
            <person name="Wilming L.G."/>
            <person name="Aidinis V."/>
            <person name="Allen J.E."/>
            <person name="Ambesi-Impiombato A."/>
            <person name="Apweiler R."/>
            <person name="Aturaliya R.N."/>
            <person name="Bailey T.L."/>
            <person name="Bansal M."/>
            <person name="Baxter L."/>
            <person name="Beisel K.W."/>
            <person name="Bersano T."/>
            <person name="Bono H."/>
            <person name="Chalk A.M."/>
            <person name="Chiu K.P."/>
            <person name="Choudhary V."/>
            <person name="Christoffels A."/>
            <person name="Clutterbuck D.R."/>
            <person name="Crowe M.L."/>
            <person name="Dalla E."/>
            <person name="Dalrymple B.P."/>
            <person name="de Bono B."/>
            <person name="Della Gatta G."/>
            <person name="di Bernardo D."/>
            <person name="Down T."/>
            <person name="Engstrom P."/>
            <person name="Fagiolini M."/>
            <person name="Faulkner G."/>
            <person name="Fletcher C.F."/>
            <person name="Fukushima T."/>
            <person name="Furuno M."/>
            <person name="Futaki S."/>
            <person name="Gariboldi M."/>
            <person name="Georgii-Hemming P."/>
            <person name="Gingeras T.R."/>
            <person name="Gojobori T."/>
            <person name="Green R.E."/>
            <person name="Gustincich S."/>
            <person name="Harbers M."/>
            <person name="Hayashi Y."/>
            <person name="Hensch T.K."/>
            <person name="Hirokawa N."/>
            <person name="Hill D."/>
            <person name="Huminiecki L."/>
            <person name="Iacono M."/>
            <person name="Ikeo K."/>
            <person name="Iwama A."/>
            <person name="Ishikawa T."/>
            <person name="Jakt M."/>
            <person name="Kanapin A."/>
            <person name="Katoh M."/>
            <person name="Kawasawa Y."/>
            <person name="Kelso J."/>
            <person name="Kitamura H."/>
            <person name="Kitano H."/>
            <person name="Kollias G."/>
            <person name="Krishnan S.P."/>
            <person name="Kruger A."/>
            <person name="Kummerfeld S.K."/>
            <person name="Kurochkin I.V."/>
            <person name="Lareau L.F."/>
            <person name="Lazarevic D."/>
            <person name="Lipovich L."/>
            <person name="Liu J."/>
            <person name="Liuni S."/>
            <person name="McWilliam S."/>
            <person name="Madan Babu M."/>
            <person name="Madera M."/>
            <person name="Marchionni L."/>
            <person name="Matsuda H."/>
            <person name="Matsuzawa S."/>
            <person name="Miki H."/>
            <person name="Mignone F."/>
            <person name="Miyake S."/>
            <person name="Morris K."/>
            <person name="Mottagui-Tabar S."/>
            <person name="Mulder N."/>
            <person name="Nakano N."/>
            <person name="Nakauchi H."/>
            <person name="Ng P."/>
            <person name="Nilsson R."/>
            <person name="Nishiguchi S."/>
            <person name="Nishikawa S."/>
            <person name="Nori F."/>
            <person name="Ohara O."/>
            <person name="Okazaki Y."/>
            <person name="Orlando V."/>
            <person name="Pang K.C."/>
            <person name="Pavan W.J."/>
            <person name="Pavesi G."/>
            <person name="Pesole G."/>
            <person name="Petrovsky N."/>
            <person name="Piazza S."/>
            <person name="Reed J."/>
            <person name="Reid J.F."/>
            <person name="Ring B.Z."/>
            <person name="Ringwald M."/>
            <person name="Rost B."/>
            <person name="Ruan Y."/>
            <person name="Salzberg S.L."/>
            <person name="Sandelin A."/>
            <person name="Schneider C."/>
            <person name="Schoenbach C."/>
            <person name="Sekiguchi K."/>
            <person name="Semple C.A."/>
            <person name="Seno S."/>
            <person name="Sessa L."/>
            <person name="Sheng Y."/>
            <person name="Shibata Y."/>
            <person name="Shimada H."/>
            <person name="Shimada K."/>
            <person name="Silva D."/>
            <person name="Sinclair B."/>
            <person name="Sperling S."/>
            <person name="Stupka E."/>
            <person name="Sugiura K."/>
            <person name="Sultana R."/>
            <person name="Takenaka Y."/>
            <person name="Taki K."/>
            <person name="Tammoja K."/>
            <person name="Tan S.L."/>
            <person name="Tang S."/>
            <person name="Taylor M.S."/>
            <person name="Tegner J."/>
            <person name="Teichmann S.A."/>
            <person name="Ueda H.R."/>
            <person name="van Nimwegen E."/>
            <person name="Verardo R."/>
            <person name="Wei C.L."/>
            <person name="Yagi K."/>
            <person name="Yamanishi H."/>
            <person name="Zabarovsky E."/>
            <person name="Zhu S."/>
            <person name="Zimmer A."/>
            <person name="Hide W."/>
            <person name="Bult C."/>
            <person name="Grimmond S.M."/>
            <person name="Teasdale R.D."/>
            <person name="Liu E.T."/>
            <person name="Brusic V."/>
            <person name="Quackenbush J."/>
            <person name="Wahlestedt C."/>
            <person name="Mattick J.S."/>
            <person name="Hume D.A."/>
            <person name="Kai C."/>
            <person name="Sasaki D."/>
            <person name="Tomaru Y."/>
            <person name="Fukuda S."/>
            <person name="Kanamori-Katayama M."/>
            <person name="Suzuki M."/>
            <person name="Aoki J."/>
            <person name="Arakawa T."/>
            <person name="Iida J."/>
            <person name="Imamura K."/>
            <person name="Itoh M."/>
            <person name="Kato T."/>
            <person name="Kawaji H."/>
            <person name="Kawagashira N."/>
            <person name="Kawashima T."/>
            <person name="Kojima M."/>
            <person name="Kondo S."/>
            <person name="Konno H."/>
            <person name="Nakano K."/>
            <person name="Ninomiya N."/>
            <person name="Nishio T."/>
            <person name="Okada M."/>
            <person name="Plessy C."/>
            <person name="Shibata K."/>
            <person name="Shiraki T."/>
            <person name="Suzuki S."/>
            <person name="Tagami M."/>
            <person name="Waki K."/>
            <person name="Watahiki A."/>
            <person name="Okamura-Oho Y."/>
            <person name="Suzuki H."/>
            <person name="Kawai J."/>
            <person name="Hayashizaki Y."/>
        </authorList>
    </citation>
    <scope>NUCLEOTIDE SEQUENCE [LARGE SCALE MRNA] (ISOFORM 7)</scope>
    <source>
        <strain>C57BL/6J</strain>
        <tissue>Vagina</tissue>
    </source>
</reference>
<reference key="5">
    <citation type="journal article" date="1997" name="Dev. Dyn.">
        <title>Expression patterns of the four nuclear factor I genes during mouse embryogenesis indicate a potential role in development.</title>
        <authorList>
            <person name="Chaudhry A.Z."/>
            <person name="Lyons G.E."/>
            <person name="Gronostajski R.M."/>
        </authorList>
    </citation>
    <scope>NUCLEOTIDE SEQUENCE [MRNA] OF 2-509 (ISOFORM 1)</scope>
    <source>
        <strain>BALB/cJ</strain>
    </source>
</reference>
<reference key="6">
    <citation type="journal article" date="1999" name="Mamm. Genome">
        <title>Exon structure of the nuclear factor I DNA-binding domain from C. elegans to mammals.</title>
        <authorList>
            <person name="Fletcher C.F."/>
            <person name="Jenkins N.A."/>
            <person name="Copeland N.G."/>
            <person name="Chaudhry A.Z."/>
            <person name="Gronostajski R.M."/>
        </authorList>
    </citation>
    <scope>NUCLEOTIDE SEQUENCE [GENOMIC DNA] OF 33-209</scope>
    <source>
        <strain>129</strain>
    </source>
</reference>
<reference key="7">
    <citation type="journal article" date="2004" name="Mol. Cell. Proteomics">
        <title>Phosphoproteomic analysis of the developing mouse brain.</title>
        <authorList>
            <person name="Ballif B.A."/>
            <person name="Villen J."/>
            <person name="Beausoleil S.A."/>
            <person name="Schwartz D."/>
            <person name="Gygi S.P."/>
        </authorList>
    </citation>
    <scope>PHOSPHORYLATION [LARGE SCALE ANALYSIS] AT SER-310</scope>
    <scope>IDENTIFICATION BY MASS SPECTROMETRY [LARGE SCALE ANALYSIS]</scope>
    <source>
        <tissue>Embryonic brain</tissue>
    </source>
</reference>
<reference key="8">
    <citation type="journal article" date="2007" name="Proc. Natl. Acad. Sci. U.S.A.">
        <title>Large-scale phosphorylation analysis of mouse liver.</title>
        <authorList>
            <person name="Villen J."/>
            <person name="Beausoleil S.A."/>
            <person name="Gerber S.A."/>
            <person name="Gygi S.P."/>
        </authorList>
    </citation>
    <scope>PHOSPHORYLATION [LARGE SCALE ANALYSIS] AT SER-303; SER-310; SER-323 AND SER-342</scope>
    <scope>IDENTIFICATION BY MASS SPECTROMETRY [LARGE SCALE ANALYSIS]</scope>
    <source>
        <tissue>Liver</tissue>
    </source>
</reference>
<reference key="9">
    <citation type="journal article" date="2010" name="Cell">
        <title>A tissue-specific atlas of mouse protein phosphorylation and expression.</title>
        <authorList>
            <person name="Huttlin E.L."/>
            <person name="Jedrychowski M.P."/>
            <person name="Elias J.E."/>
            <person name="Goswami T."/>
            <person name="Rad R."/>
            <person name="Beausoleil S.A."/>
            <person name="Villen J."/>
            <person name="Haas W."/>
            <person name="Sowa M.E."/>
            <person name="Gygi S.P."/>
        </authorList>
    </citation>
    <scope>PHOSPHORYLATION [LARGE SCALE ANALYSIS] AT SER-303; SER-310; SER-323 AND SER-342</scope>
    <scope>IDENTIFICATION BY MASS SPECTROMETRY [LARGE SCALE ANALYSIS]</scope>
    <source>
        <tissue>Brain</tissue>
        <tissue>Brown adipose tissue</tissue>
        <tissue>Heart</tissue>
        <tissue>Kidney</tissue>
        <tissue>Liver</tissue>
        <tissue>Lung</tissue>
        <tissue>Pancreas</tissue>
        <tissue>Spleen</tissue>
        <tissue>Testis</tissue>
    </source>
</reference>
<reference key="10">
    <citation type="journal article" date="2014" name="Mol. Cell. Proteomics">
        <title>Immunoaffinity enrichment and mass spectrometry analysis of protein methylation.</title>
        <authorList>
            <person name="Guo A."/>
            <person name="Gu H."/>
            <person name="Zhou J."/>
            <person name="Mulhern D."/>
            <person name="Wang Y."/>
            <person name="Lee K.A."/>
            <person name="Yang V."/>
            <person name="Aguiar M."/>
            <person name="Kornhauser J."/>
            <person name="Jia X."/>
            <person name="Ren J."/>
            <person name="Beausoleil S.A."/>
            <person name="Silva J.C."/>
            <person name="Vemulapalli V."/>
            <person name="Bedford M.T."/>
            <person name="Comb M.J."/>
        </authorList>
    </citation>
    <scope>METHYLATION [LARGE SCALE ANALYSIS] AT ARG-412</scope>
    <scope>IDENTIFICATION BY MASS SPECTROMETRY [LARGE SCALE ANALYSIS]</scope>
    <source>
        <tissue>Embryo</tissue>
    </source>
</reference>
<organism>
    <name type="scientific">Mus musculus</name>
    <name type="common">Mouse</name>
    <dbReference type="NCBI Taxonomy" id="10090"/>
    <lineage>
        <taxon>Eukaryota</taxon>
        <taxon>Metazoa</taxon>
        <taxon>Chordata</taxon>
        <taxon>Craniata</taxon>
        <taxon>Vertebrata</taxon>
        <taxon>Euteleostomi</taxon>
        <taxon>Mammalia</taxon>
        <taxon>Eutheria</taxon>
        <taxon>Euarchontoglires</taxon>
        <taxon>Glires</taxon>
        <taxon>Rodentia</taxon>
        <taxon>Myomorpha</taxon>
        <taxon>Muroidea</taxon>
        <taxon>Muridae</taxon>
        <taxon>Murinae</taxon>
        <taxon>Mus</taxon>
        <taxon>Mus</taxon>
    </lineage>
</organism>
<evidence type="ECO:0000250" key="1">
    <source>
        <dbReference type="UniProtKB" id="P09414"/>
    </source>
</evidence>
<evidence type="ECO:0000250" key="2">
    <source>
        <dbReference type="UniProtKB" id="Q12857"/>
    </source>
</evidence>
<evidence type="ECO:0000255" key="3">
    <source>
        <dbReference type="PROSITE-ProRule" id="PRU00436"/>
    </source>
</evidence>
<evidence type="ECO:0000256" key="4">
    <source>
        <dbReference type="SAM" id="MobiDB-lite"/>
    </source>
</evidence>
<evidence type="ECO:0000303" key="5">
    <source>
    </source>
</evidence>
<evidence type="ECO:0000303" key="6">
    <source>
    </source>
</evidence>
<evidence type="ECO:0000303" key="7">
    <source>
    </source>
</evidence>
<evidence type="ECO:0000305" key="8"/>
<evidence type="ECO:0007744" key="9">
    <source>
    </source>
</evidence>
<evidence type="ECO:0007744" key="10">
    <source>
    </source>
</evidence>
<evidence type="ECO:0007744" key="11">
    <source>
    </source>
</evidence>
<evidence type="ECO:0007744" key="12">
    <source>
    </source>
</evidence>
<comment type="function">
    <text>Recognizes and binds the palindromic sequence 5'-TTGGCNNNNNGCCAA-3' present in viral and cellular promoters and in the origin of replication of adenovirus type 2. These proteins are individually capable of activating transcription and replication.</text>
</comment>
<comment type="subunit">
    <text>Binds DNA as a homodimer.</text>
</comment>
<comment type="subcellular location">
    <subcellularLocation>
        <location>Nucleus</location>
    </subcellularLocation>
</comment>
<comment type="alternative products">
    <event type="alternative splicing"/>
    <isoform>
        <id>Q02780-1</id>
        <name>2</name>
        <sequence type="displayed"/>
    </isoform>
    <isoform>
        <id>Q02780-2</id>
        <name>1</name>
        <sequence type="described" ref="VSP_003537 VSP_003544"/>
    </isoform>
    <isoform>
        <id>Q02780-3</id>
        <name>3</name>
        <sequence type="described" ref="VSP_003538"/>
    </isoform>
    <isoform>
        <id>Q02780-4</id>
        <name>4</name>
        <sequence type="described" ref="VSP_003539"/>
    </isoform>
    <isoform>
        <id>Q02780-5</id>
        <name>5</name>
        <sequence type="described" ref="VSP_003537 VSP_003541"/>
    </isoform>
    <isoform>
        <id>Q02780-6</id>
        <name>6</name>
        <sequence type="described" ref="VSP_003540 VSP_003542 VSP_003543"/>
    </isoform>
    <isoform>
        <id>Q02780-7</id>
        <name>7</name>
        <sequence type="described" ref="VSP_003537"/>
    </isoform>
</comment>
<comment type="domain">
    <text evidence="2">The 9aaTAD motif is a transactivation domain present in a large number of yeast and animal transcription factors.</text>
</comment>
<comment type="miscellaneous">
    <molecule>Isoform 4</molecule>
    <text evidence="8">Incomplete sequence.</text>
</comment>
<comment type="miscellaneous">
    <molecule>Isoform 5</molecule>
    <text evidence="8">Incomplete sequence.</text>
</comment>
<comment type="miscellaneous">
    <molecule>Isoform 6</molecule>
    <text evidence="8">Incomplete sequence.</text>
</comment>
<comment type="similarity">
    <text evidence="3">Belongs to the CTF/NF-I family.</text>
</comment>
<dbReference type="EMBL" id="D90172">
    <property type="protein sequence ID" value="BAA20909.1"/>
    <property type="molecule type" value="mRNA"/>
</dbReference>
<dbReference type="EMBL" id="D90173">
    <property type="protein sequence ID" value="BAA14203.1"/>
    <property type="molecule type" value="mRNA"/>
</dbReference>
<dbReference type="EMBL" id="D90174">
    <property type="protein sequence ID" value="BAA14204.1"/>
    <property type="molecule type" value="mRNA"/>
</dbReference>
<dbReference type="EMBL" id="D90175">
    <property type="protein sequence ID" value="BAA14205.1"/>
    <property type="molecule type" value="mRNA"/>
</dbReference>
<dbReference type="EMBL" id="D90176">
    <property type="protein sequence ID" value="BAA14206.1"/>
    <property type="molecule type" value="mRNA"/>
</dbReference>
<dbReference type="EMBL" id="AF326554">
    <property type="protein sequence ID" value="AAL37400.1"/>
    <property type="molecule type" value="mRNA"/>
</dbReference>
<dbReference type="EMBL" id="AF326553">
    <property type="protein sequence ID" value="AAL37399.1"/>
    <property type="molecule type" value="mRNA"/>
</dbReference>
<dbReference type="EMBL" id="Y07690">
    <property type="protein sequence ID" value="CAA68954.1"/>
    <property type="molecule type" value="mRNA"/>
</dbReference>
<dbReference type="EMBL" id="Y07691">
    <property type="protein sequence ID" value="CAA68955.1"/>
    <property type="molecule type" value="mRNA"/>
</dbReference>
<dbReference type="EMBL" id="AK137731">
    <property type="protein sequence ID" value="BAE23481.1"/>
    <property type="molecule type" value="mRNA"/>
</dbReference>
<dbReference type="EMBL" id="AK052204">
    <property type="protein sequence ID" value="BAC34883.1"/>
    <property type="molecule type" value="mRNA"/>
</dbReference>
<dbReference type="EMBL" id="U57633">
    <property type="protein sequence ID" value="AAB49928.1"/>
    <property type="molecule type" value="mRNA"/>
</dbReference>
<dbReference type="EMBL" id="AF111263">
    <property type="protein sequence ID" value="AAD39098.1"/>
    <property type="molecule type" value="Genomic_DNA"/>
</dbReference>
<dbReference type="CCDS" id="CCDS18373.1">
    <molecule id="Q02780-7"/>
</dbReference>
<dbReference type="CCDS" id="CCDS51234.1">
    <molecule id="Q02780-5"/>
</dbReference>
<dbReference type="PIR" id="B36596">
    <property type="entry name" value="B36596"/>
</dbReference>
<dbReference type="RefSeq" id="NP_001116424.1">
    <molecule id="Q02780-1"/>
    <property type="nucleotide sequence ID" value="NM_001122952.1"/>
</dbReference>
<dbReference type="RefSeq" id="NP_001116425.1">
    <molecule id="Q02780-5"/>
    <property type="nucleotide sequence ID" value="NM_001122953.1"/>
</dbReference>
<dbReference type="RefSeq" id="NP_035035.1">
    <molecule id="Q02780-7"/>
    <property type="nucleotide sequence ID" value="NM_010905.3"/>
</dbReference>
<dbReference type="RefSeq" id="XP_006502905.1">
    <molecule id="Q02780-3"/>
    <property type="nucleotide sequence ID" value="XM_006502842.4"/>
</dbReference>
<dbReference type="RefSeq" id="XP_030109163.1">
    <molecule id="Q02780-3"/>
    <property type="nucleotide sequence ID" value="XM_030253303.2"/>
</dbReference>
<dbReference type="SMR" id="Q02780"/>
<dbReference type="FunCoup" id="Q02780">
    <property type="interactions" value="1380"/>
</dbReference>
<dbReference type="IntAct" id="Q02780">
    <property type="interactions" value="1"/>
</dbReference>
<dbReference type="STRING" id="10090.ENSMUSP00000074899"/>
<dbReference type="CarbonylDB" id="Q02780"/>
<dbReference type="GlyGen" id="Q02780">
    <property type="glycosylation" value="4 sites, 1 O-linked glycan (2 sites)"/>
</dbReference>
<dbReference type="iPTMnet" id="Q02780"/>
<dbReference type="PhosphoSitePlus" id="Q02780"/>
<dbReference type="jPOST" id="Q02780"/>
<dbReference type="PaxDb" id="10090-ENSMUSP00000074899"/>
<dbReference type="PeptideAtlas" id="Q02780"/>
<dbReference type="ProteomicsDB" id="287490">
    <molecule id="Q02780-1"/>
</dbReference>
<dbReference type="ProteomicsDB" id="287491">
    <molecule id="Q02780-2"/>
</dbReference>
<dbReference type="ProteomicsDB" id="287492">
    <molecule id="Q02780-3"/>
</dbReference>
<dbReference type="ProteomicsDB" id="287493">
    <molecule id="Q02780-4"/>
</dbReference>
<dbReference type="ProteomicsDB" id="287494">
    <molecule id="Q02780-5"/>
</dbReference>
<dbReference type="ProteomicsDB" id="287495">
    <molecule id="Q02780-6"/>
</dbReference>
<dbReference type="ProteomicsDB" id="287496">
    <molecule id="Q02780-7"/>
</dbReference>
<dbReference type="Pumba" id="Q02780"/>
<dbReference type="Antibodypedia" id="1812">
    <property type="antibodies" value="288 antibodies from 31 providers"/>
</dbReference>
<dbReference type="DNASU" id="18027"/>
<dbReference type="Ensembl" id="ENSMUST00000075448.13">
    <molecule id="Q02780-7"/>
    <property type="protein sequence ID" value="ENSMUSP00000074899.7"/>
    <property type="gene ID" value="ENSMUSG00000028565.19"/>
</dbReference>
<dbReference type="Ensembl" id="ENSMUST00000092532.13">
    <molecule id="Q02780-5"/>
    <property type="protein sequence ID" value="ENSMUSP00000130032.2"/>
    <property type="gene ID" value="ENSMUSG00000028565.19"/>
</dbReference>
<dbReference type="GeneID" id="18027"/>
<dbReference type="KEGG" id="mmu:18027"/>
<dbReference type="UCSC" id="uc008tts.2">
    <molecule id="Q02780-1"/>
    <property type="organism name" value="mouse"/>
</dbReference>
<dbReference type="UCSC" id="uc008ttt.2">
    <molecule id="Q02780-6"/>
    <property type="organism name" value="mouse"/>
</dbReference>
<dbReference type="UCSC" id="uc008ttu.2">
    <molecule id="Q02780-7"/>
    <property type="organism name" value="mouse"/>
</dbReference>
<dbReference type="UCSC" id="uc008ttv.2">
    <molecule id="Q02780-5"/>
    <property type="organism name" value="mouse"/>
</dbReference>
<dbReference type="AGR" id="MGI:108056"/>
<dbReference type="CTD" id="4774"/>
<dbReference type="MGI" id="MGI:108056">
    <property type="gene designation" value="Nfia"/>
</dbReference>
<dbReference type="VEuPathDB" id="HostDB:ENSMUSG00000028565"/>
<dbReference type="eggNOG" id="KOG3663">
    <property type="taxonomic scope" value="Eukaryota"/>
</dbReference>
<dbReference type="GeneTree" id="ENSGT00950000182916"/>
<dbReference type="InParanoid" id="Q02780"/>
<dbReference type="OMA" id="XSPHATP"/>
<dbReference type="OrthoDB" id="73294at9989"/>
<dbReference type="PhylomeDB" id="Q02780"/>
<dbReference type="TreeFam" id="TF313889"/>
<dbReference type="BioGRID-ORCS" id="18027">
    <property type="hits" value="3 hits in 80 CRISPR screens"/>
</dbReference>
<dbReference type="ChiTaRS" id="Nfia">
    <property type="organism name" value="mouse"/>
</dbReference>
<dbReference type="PRO" id="PR:Q02780"/>
<dbReference type="Proteomes" id="UP000000589">
    <property type="component" value="Chromosome 4"/>
</dbReference>
<dbReference type="RNAct" id="Q02780">
    <property type="molecule type" value="protein"/>
</dbReference>
<dbReference type="Bgee" id="ENSMUSG00000028565">
    <property type="expression patterns" value="Expressed in ureter smooth muscle and 263 other cell types or tissues"/>
</dbReference>
<dbReference type="ExpressionAtlas" id="Q02780">
    <property type="expression patterns" value="baseline and differential"/>
</dbReference>
<dbReference type="GO" id="GO:0030054">
    <property type="term" value="C:cell junction"/>
    <property type="evidence" value="ECO:0007669"/>
    <property type="project" value="Ensembl"/>
</dbReference>
<dbReference type="GO" id="GO:0005654">
    <property type="term" value="C:nucleoplasm"/>
    <property type="evidence" value="ECO:0007669"/>
    <property type="project" value="Ensembl"/>
</dbReference>
<dbReference type="GO" id="GO:0005634">
    <property type="term" value="C:nucleus"/>
    <property type="evidence" value="ECO:0000314"/>
    <property type="project" value="MGI"/>
</dbReference>
<dbReference type="GO" id="GO:0003682">
    <property type="term" value="F:chromatin binding"/>
    <property type="evidence" value="ECO:0000314"/>
    <property type="project" value="MGI"/>
</dbReference>
<dbReference type="GO" id="GO:0003677">
    <property type="term" value="F:DNA binding"/>
    <property type="evidence" value="ECO:0000314"/>
    <property type="project" value="MGI"/>
</dbReference>
<dbReference type="GO" id="GO:0001228">
    <property type="term" value="F:DNA-binding transcription activator activity, RNA polymerase II-specific"/>
    <property type="evidence" value="ECO:0007669"/>
    <property type="project" value="Ensembl"/>
</dbReference>
<dbReference type="GO" id="GO:0140297">
    <property type="term" value="F:DNA-binding transcription factor binding"/>
    <property type="evidence" value="ECO:0007669"/>
    <property type="project" value="Ensembl"/>
</dbReference>
<dbReference type="GO" id="GO:0000978">
    <property type="term" value="F:RNA polymerase II cis-regulatory region sequence-specific DNA binding"/>
    <property type="evidence" value="ECO:0007669"/>
    <property type="project" value="Ensembl"/>
</dbReference>
<dbReference type="GO" id="GO:0030509">
    <property type="term" value="P:BMP signaling pathway"/>
    <property type="evidence" value="ECO:0000315"/>
    <property type="project" value="MGI"/>
</dbReference>
<dbReference type="GO" id="GO:0051216">
    <property type="term" value="P:cartilage development"/>
    <property type="evidence" value="ECO:0000315"/>
    <property type="project" value="MGI"/>
</dbReference>
<dbReference type="GO" id="GO:0000902">
    <property type="term" value="P:cell morphogenesis"/>
    <property type="evidence" value="ECO:0000315"/>
    <property type="project" value="MGI"/>
</dbReference>
<dbReference type="GO" id="GO:0006260">
    <property type="term" value="P:DNA replication"/>
    <property type="evidence" value="ECO:0007669"/>
    <property type="project" value="UniProtKB-KW"/>
</dbReference>
<dbReference type="GO" id="GO:0010458">
    <property type="term" value="P:exit from mitosis"/>
    <property type="evidence" value="ECO:0000315"/>
    <property type="project" value="MGI"/>
</dbReference>
<dbReference type="GO" id="GO:0010467">
    <property type="term" value="P:gene expression"/>
    <property type="evidence" value="ECO:0000315"/>
    <property type="project" value="MGI"/>
</dbReference>
<dbReference type="GO" id="GO:0048699">
    <property type="term" value="P:generation of neurons"/>
    <property type="evidence" value="ECO:0000315"/>
    <property type="project" value="MGI"/>
</dbReference>
<dbReference type="GO" id="GO:0021780">
    <property type="term" value="P:glial cell fate specification"/>
    <property type="evidence" value="ECO:0000315"/>
    <property type="project" value="MGI"/>
</dbReference>
<dbReference type="GO" id="GO:0014009">
    <property type="term" value="P:glial cell proliferation"/>
    <property type="evidence" value="ECO:0000315"/>
    <property type="project" value="MGI"/>
</dbReference>
<dbReference type="GO" id="GO:0035108">
    <property type="term" value="P:limb morphogenesis"/>
    <property type="evidence" value="ECO:0000315"/>
    <property type="project" value="MGI"/>
</dbReference>
<dbReference type="GO" id="GO:0061351">
    <property type="term" value="P:neural precursor cell proliferation"/>
    <property type="evidence" value="ECO:0000315"/>
    <property type="project" value="MGI"/>
</dbReference>
<dbReference type="GO" id="GO:0022008">
    <property type="term" value="P:neurogenesis"/>
    <property type="evidence" value="ECO:0000315"/>
    <property type="project" value="MGI"/>
</dbReference>
<dbReference type="GO" id="GO:0048665">
    <property type="term" value="P:neuron fate specification"/>
    <property type="evidence" value="ECO:0000315"/>
    <property type="project" value="MGI"/>
</dbReference>
<dbReference type="GO" id="GO:0045944">
    <property type="term" value="P:positive regulation of transcription by RNA polymerase II"/>
    <property type="evidence" value="ECO:0000314"/>
    <property type="project" value="UniProtKB"/>
</dbReference>
<dbReference type="GO" id="GO:0009611">
    <property type="term" value="P:response to wounding"/>
    <property type="evidence" value="ECO:0000315"/>
    <property type="project" value="MGI"/>
</dbReference>
<dbReference type="GO" id="GO:0060041">
    <property type="term" value="P:retina development in camera-type eye"/>
    <property type="evidence" value="ECO:0000315"/>
    <property type="project" value="MGI"/>
</dbReference>
<dbReference type="GO" id="GO:0060074">
    <property type="term" value="P:synapse maturation"/>
    <property type="evidence" value="ECO:0000315"/>
    <property type="project" value="MGI"/>
</dbReference>
<dbReference type="GO" id="GO:0072189">
    <property type="term" value="P:ureter development"/>
    <property type="evidence" value="ECO:0000315"/>
    <property type="project" value="MGI"/>
</dbReference>
<dbReference type="InterPro" id="IPR000647">
    <property type="entry name" value="CTF/NFI"/>
</dbReference>
<dbReference type="InterPro" id="IPR020604">
    <property type="entry name" value="CTF/NFI_DNA-bd-dom"/>
</dbReference>
<dbReference type="InterPro" id="IPR019739">
    <property type="entry name" value="CTF/NFI_DNA-bd_CS"/>
</dbReference>
<dbReference type="InterPro" id="IPR019548">
    <property type="entry name" value="CTF/NFI_DNA-bd_N"/>
</dbReference>
<dbReference type="InterPro" id="IPR003619">
    <property type="entry name" value="MAD_homology1_Dwarfin-type"/>
</dbReference>
<dbReference type="PANTHER" id="PTHR11492:SF6">
    <property type="entry name" value="NUCLEAR FACTOR 1 A-TYPE"/>
    <property type="match status" value="1"/>
</dbReference>
<dbReference type="PANTHER" id="PTHR11492">
    <property type="entry name" value="NUCLEAR FACTOR I"/>
    <property type="match status" value="1"/>
</dbReference>
<dbReference type="Pfam" id="PF00859">
    <property type="entry name" value="CTF_NFI"/>
    <property type="match status" value="1"/>
</dbReference>
<dbReference type="Pfam" id="PF03165">
    <property type="entry name" value="MH1"/>
    <property type="match status" value="1"/>
</dbReference>
<dbReference type="Pfam" id="PF10524">
    <property type="entry name" value="NfI_DNAbd_pre-N"/>
    <property type="match status" value="1"/>
</dbReference>
<dbReference type="SMART" id="SM00523">
    <property type="entry name" value="DWA"/>
    <property type="match status" value="1"/>
</dbReference>
<dbReference type="PROSITE" id="PS00349">
    <property type="entry name" value="CTF_NFI_1"/>
    <property type="match status" value="1"/>
</dbReference>
<dbReference type="PROSITE" id="PS51080">
    <property type="entry name" value="CTF_NFI_2"/>
    <property type="match status" value="1"/>
</dbReference>
<proteinExistence type="evidence at protein level"/>
<protein>
    <recommendedName>
        <fullName>Nuclear factor 1 A-type</fullName>
        <shortName>NF1-A</shortName>
        <shortName>Nuclear factor 1/A</shortName>
    </recommendedName>
    <alternativeName>
        <fullName>CCAAT-box-binding transcription factor</fullName>
        <shortName>CTF</shortName>
    </alternativeName>
    <alternativeName>
        <fullName>Nuclear factor I/A</fullName>
        <shortName>NF-I/A</shortName>
        <shortName>NFI-A</shortName>
    </alternativeName>
    <alternativeName>
        <fullName>TGGCA-binding protein</fullName>
    </alternativeName>
</protein>
<name>NFIA_MOUSE</name>